<accession>Q9RR60</accession>
<keyword id="KW-0963">Cytoplasm</keyword>
<keyword id="KW-0324">Glycolysis</keyword>
<keyword id="KW-0456">Lyase</keyword>
<keyword id="KW-0460">Magnesium</keyword>
<keyword id="KW-0479">Metal-binding</keyword>
<keyword id="KW-1185">Reference proteome</keyword>
<keyword id="KW-0964">Secreted</keyword>
<feature type="chain" id="PRO_0000133878" description="Enolase">
    <location>
        <begin position="1"/>
        <end position="422"/>
    </location>
</feature>
<feature type="active site" description="Proton donor" evidence="1">
    <location>
        <position position="203"/>
    </location>
</feature>
<feature type="active site" description="Proton acceptor" evidence="1">
    <location>
        <position position="335"/>
    </location>
</feature>
<feature type="binding site" evidence="1">
    <location>
        <position position="161"/>
    </location>
    <ligand>
        <name>(2R)-2-phosphoglycerate</name>
        <dbReference type="ChEBI" id="CHEBI:58289"/>
    </ligand>
</feature>
<feature type="binding site" evidence="1">
    <location>
        <position position="240"/>
    </location>
    <ligand>
        <name>Mg(2+)</name>
        <dbReference type="ChEBI" id="CHEBI:18420"/>
    </ligand>
</feature>
<feature type="binding site" evidence="1">
    <location>
        <position position="283"/>
    </location>
    <ligand>
        <name>Mg(2+)</name>
        <dbReference type="ChEBI" id="CHEBI:18420"/>
    </ligand>
</feature>
<feature type="binding site" evidence="1">
    <location>
        <position position="310"/>
    </location>
    <ligand>
        <name>Mg(2+)</name>
        <dbReference type="ChEBI" id="CHEBI:18420"/>
    </ligand>
</feature>
<feature type="binding site" evidence="1">
    <location>
        <position position="335"/>
    </location>
    <ligand>
        <name>(2R)-2-phosphoglycerate</name>
        <dbReference type="ChEBI" id="CHEBI:58289"/>
    </ligand>
</feature>
<feature type="binding site" evidence="1">
    <location>
        <position position="364"/>
    </location>
    <ligand>
        <name>(2R)-2-phosphoglycerate</name>
        <dbReference type="ChEBI" id="CHEBI:58289"/>
    </ligand>
</feature>
<feature type="binding site" evidence="1">
    <location>
        <position position="365"/>
    </location>
    <ligand>
        <name>(2R)-2-phosphoglycerate</name>
        <dbReference type="ChEBI" id="CHEBI:58289"/>
    </ligand>
</feature>
<feature type="binding site" evidence="1">
    <location>
        <position position="386"/>
    </location>
    <ligand>
        <name>(2R)-2-phosphoglycerate</name>
        <dbReference type="ChEBI" id="CHEBI:58289"/>
    </ligand>
</feature>
<dbReference type="EC" id="4.2.1.11" evidence="1"/>
<dbReference type="EMBL" id="AE000513">
    <property type="protein sequence ID" value="AAF12173.1"/>
    <property type="molecule type" value="Genomic_DNA"/>
</dbReference>
<dbReference type="PIR" id="D75251">
    <property type="entry name" value="D75251"/>
</dbReference>
<dbReference type="RefSeq" id="NP_296355.1">
    <property type="nucleotide sequence ID" value="NC_001263.1"/>
</dbReference>
<dbReference type="RefSeq" id="WP_010889260.1">
    <property type="nucleotide sequence ID" value="NC_001263.1"/>
</dbReference>
<dbReference type="SMR" id="Q9RR60"/>
<dbReference type="FunCoup" id="Q9RR60">
    <property type="interactions" value="353"/>
</dbReference>
<dbReference type="STRING" id="243230.DR_2637"/>
<dbReference type="PaxDb" id="243230-DR_2637"/>
<dbReference type="EnsemblBacteria" id="AAF12173">
    <property type="protein sequence ID" value="AAF12173"/>
    <property type="gene ID" value="DR_2637"/>
</dbReference>
<dbReference type="GeneID" id="69518891"/>
<dbReference type="KEGG" id="dra:DR_2637"/>
<dbReference type="PATRIC" id="fig|243230.17.peg.2885"/>
<dbReference type="eggNOG" id="COG0148">
    <property type="taxonomic scope" value="Bacteria"/>
</dbReference>
<dbReference type="HOGENOM" id="CLU_031223_2_1_0"/>
<dbReference type="InParanoid" id="Q9RR60"/>
<dbReference type="OrthoDB" id="9804716at2"/>
<dbReference type="UniPathway" id="UPA00109">
    <property type="reaction ID" value="UER00187"/>
</dbReference>
<dbReference type="Proteomes" id="UP000002524">
    <property type="component" value="Chromosome 1"/>
</dbReference>
<dbReference type="GO" id="GO:0009986">
    <property type="term" value="C:cell surface"/>
    <property type="evidence" value="ECO:0007669"/>
    <property type="project" value="UniProtKB-SubCell"/>
</dbReference>
<dbReference type="GO" id="GO:0005576">
    <property type="term" value="C:extracellular region"/>
    <property type="evidence" value="ECO:0007669"/>
    <property type="project" value="UniProtKB-SubCell"/>
</dbReference>
<dbReference type="GO" id="GO:0000015">
    <property type="term" value="C:phosphopyruvate hydratase complex"/>
    <property type="evidence" value="ECO:0000318"/>
    <property type="project" value="GO_Central"/>
</dbReference>
<dbReference type="GO" id="GO:0000287">
    <property type="term" value="F:magnesium ion binding"/>
    <property type="evidence" value="ECO:0007669"/>
    <property type="project" value="UniProtKB-UniRule"/>
</dbReference>
<dbReference type="GO" id="GO:0004634">
    <property type="term" value="F:phosphopyruvate hydratase activity"/>
    <property type="evidence" value="ECO:0000318"/>
    <property type="project" value="GO_Central"/>
</dbReference>
<dbReference type="GO" id="GO:0006096">
    <property type="term" value="P:glycolytic process"/>
    <property type="evidence" value="ECO:0000318"/>
    <property type="project" value="GO_Central"/>
</dbReference>
<dbReference type="CDD" id="cd03313">
    <property type="entry name" value="enolase"/>
    <property type="match status" value="1"/>
</dbReference>
<dbReference type="FunFam" id="3.20.20.120:FF:000001">
    <property type="entry name" value="Enolase"/>
    <property type="match status" value="1"/>
</dbReference>
<dbReference type="FunFam" id="3.30.390.10:FF:000001">
    <property type="entry name" value="Enolase"/>
    <property type="match status" value="1"/>
</dbReference>
<dbReference type="Gene3D" id="3.20.20.120">
    <property type="entry name" value="Enolase-like C-terminal domain"/>
    <property type="match status" value="1"/>
</dbReference>
<dbReference type="Gene3D" id="3.30.390.10">
    <property type="entry name" value="Enolase-like, N-terminal domain"/>
    <property type="match status" value="1"/>
</dbReference>
<dbReference type="HAMAP" id="MF_00318">
    <property type="entry name" value="Enolase"/>
    <property type="match status" value="1"/>
</dbReference>
<dbReference type="InterPro" id="IPR000941">
    <property type="entry name" value="Enolase"/>
</dbReference>
<dbReference type="InterPro" id="IPR036849">
    <property type="entry name" value="Enolase-like_C_sf"/>
</dbReference>
<dbReference type="InterPro" id="IPR029017">
    <property type="entry name" value="Enolase-like_N"/>
</dbReference>
<dbReference type="InterPro" id="IPR020810">
    <property type="entry name" value="Enolase_C"/>
</dbReference>
<dbReference type="InterPro" id="IPR020809">
    <property type="entry name" value="Enolase_CS"/>
</dbReference>
<dbReference type="InterPro" id="IPR020811">
    <property type="entry name" value="Enolase_N"/>
</dbReference>
<dbReference type="NCBIfam" id="TIGR01060">
    <property type="entry name" value="eno"/>
    <property type="match status" value="1"/>
</dbReference>
<dbReference type="PANTHER" id="PTHR11902">
    <property type="entry name" value="ENOLASE"/>
    <property type="match status" value="1"/>
</dbReference>
<dbReference type="PANTHER" id="PTHR11902:SF1">
    <property type="entry name" value="ENOLASE"/>
    <property type="match status" value="1"/>
</dbReference>
<dbReference type="Pfam" id="PF00113">
    <property type="entry name" value="Enolase_C"/>
    <property type="match status" value="1"/>
</dbReference>
<dbReference type="Pfam" id="PF03952">
    <property type="entry name" value="Enolase_N"/>
    <property type="match status" value="1"/>
</dbReference>
<dbReference type="PIRSF" id="PIRSF001400">
    <property type="entry name" value="Enolase"/>
    <property type="match status" value="1"/>
</dbReference>
<dbReference type="PRINTS" id="PR00148">
    <property type="entry name" value="ENOLASE"/>
</dbReference>
<dbReference type="SFLD" id="SFLDS00001">
    <property type="entry name" value="Enolase"/>
    <property type="match status" value="1"/>
</dbReference>
<dbReference type="SFLD" id="SFLDF00002">
    <property type="entry name" value="enolase"/>
    <property type="match status" value="1"/>
</dbReference>
<dbReference type="SMART" id="SM01192">
    <property type="entry name" value="Enolase_C"/>
    <property type="match status" value="1"/>
</dbReference>
<dbReference type="SMART" id="SM01193">
    <property type="entry name" value="Enolase_N"/>
    <property type="match status" value="1"/>
</dbReference>
<dbReference type="SUPFAM" id="SSF51604">
    <property type="entry name" value="Enolase C-terminal domain-like"/>
    <property type="match status" value="1"/>
</dbReference>
<dbReference type="SUPFAM" id="SSF54826">
    <property type="entry name" value="Enolase N-terminal domain-like"/>
    <property type="match status" value="1"/>
</dbReference>
<dbReference type="PROSITE" id="PS00164">
    <property type="entry name" value="ENOLASE"/>
    <property type="match status" value="1"/>
</dbReference>
<protein>
    <recommendedName>
        <fullName evidence="1">Enolase</fullName>
        <ecNumber evidence="1">4.2.1.11</ecNumber>
    </recommendedName>
    <alternativeName>
        <fullName evidence="1">2-phospho-D-glycerate hydro-lyase</fullName>
    </alternativeName>
    <alternativeName>
        <fullName evidence="1">2-phosphoglycerate dehydratase</fullName>
    </alternativeName>
</protein>
<proteinExistence type="inferred from homology"/>
<sequence>MNIEKVIAREVLDSRGNPTVEAEVHLDSGFSGRAIVPSGASTGSHEALELRDGGERYMGKGVERAVQNVREALGPALIGMDASEQAAIDKALMDVDGTSNKGNMGGNAILAVSLATARAAAAELDIPLYRYLGGSNAKTLPVPMMNVINGGAHADNSVDFQEFMVMPVGAPSFREALRYGAETFHHLKKVLSGRGYNTNVGDEGGFAPDLKSNEEALEVLLEAIQQAGYEPGKDICIALDPAVTELYKDGQYHLESEGRVLSSDEMIDFWADWTSRYPIVSIEDGLAEDDWDGWERLTAKVGAKTQLVGDDLFVTNPERLQQGIDRKVGNAILVKVNQIGSLTESMDAIELAKRHHYGTIISHRSGESEDAFIADLAVATNAGQIKTGSASRSDRIAKYNQLLRIEDQLGDRAVFPGRKALR</sequence>
<gene>
    <name evidence="1" type="primary">eno</name>
    <name type="ordered locus">DR_2637</name>
</gene>
<organism>
    <name type="scientific">Deinococcus radiodurans (strain ATCC 13939 / DSM 20539 / JCM 16871 / CCUG 27074 / LMG 4051 / NBRC 15346 / NCIMB 9279 / VKM B-1422 / R1)</name>
    <dbReference type="NCBI Taxonomy" id="243230"/>
    <lineage>
        <taxon>Bacteria</taxon>
        <taxon>Thermotogati</taxon>
        <taxon>Deinococcota</taxon>
        <taxon>Deinococci</taxon>
        <taxon>Deinococcales</taxon>
        <taxon>Deinococcaceae</taxon>
        <taxon>Deinococcus</taxon>
    </lineage>
</organism>
<evidence type="ECO:0000255" key="1">
    <source>
        <dbReference type="HAMAP-Rule" id="MF_00318"/>
    </source>
</evidence>
<reference key="1">
    <citation type="journal article" date="1999" name="Science">
        <title>Genome sequence of the radioresistant bacterium Deinococcus radiodurans R1.</title>
        <authorList>
            <person name="White O."/>
            <person name="Eisen J.A."/>
            <person name="Heidelberg J.F."/>
            <person name="Hickey E.K."/>
            <person name="Peterson J.D."/>
            <person name="Dodson R.J."/>
            <person name="Haft D.H."/>
            <person name="Gwinn M.L."/>
            <person name="Nelson W.C."/>
            <person name="Richardson D.L."/>
            <person name="Moffat K.S."/>
            <person name="Qin H."/>
            <person name="Jiang L."/>
            <person name="Pamphile W."/>
            <person name="Crosby M."/>
            <person name="Shen M."/>
            <person name="Vamathevan J.J."/>
            <person name="Lam P."/>
            <person name="McDonald L.A."/>
            <person name="Utterback T.R."/>
            <person name="Zalewski C."/>
            <person name="Makarova K.S."/>
            <person name="Aravind L."/>
            <person name="Daly M.J."/>
            <person name="Minton K.W."/>
            <person name="Fleischmann R.D."/>
            <person name="Ketchum K.A."/>
            <person name="Nelson K.E."/>
            <person name="Salzberg S.L."/>
            <person name="Smith H.O."/>
            <person name="Venter J.C."/>
            <person name="Fraser C.M."/>
        </authorList>
    </citation>
    <scope>NUCLEOTIDE SEQUENCE [LARGE SCALE GENOMIC DNA]</scope>
    <source>
        <strain>ATCC 13939 / DSM 20539 / JCM 16871 / CCUG 27074 / LMG 4051 / NBRC 15346 / NCIMB 9279 / VKM B-1422 / R1</strain>
    </source>
</reference>
<comment type="function">
    <text evidence="1">Catalyzes the reversible conversion of 2-phosphoglycerate (2-PG) into phosphoenolpyruvate (PEP). It is essential for the degradation of carbohydrates via glycolysis.</text>
</comment>
<comment type="catalytic activity">
    <reaction evidence="1">
        <text>(2R)-2-phosphoglycerate = phosphoenolpyruvate + H2O</text>
        <dbReference type="Rhea" id="RHEA:10164"/>
        <dbReference type="ChEBI" id="CHEBI:15377"/>
        <dbReference type="ChEBI" id="CHEBI:58289"/>
        <dbReference type="ChEBI" id="CHEBI:58702"/>
        <dbReference type="EC" id="4.2.1.11"/>
    </reaction>
</comment>
<comment type="cofactor">
    <cofactor evidence="1">
        <name>Mg(2+)</name>
        <dbReference type="ChEBI" id="CHEBI:18420"/>
    </cofactor>
    <text evidence="1">Binds a second Mg(2+) ion via substrate during catalysis.</text>
</comment>
<comment type="pathway">
    <text evidence="1">Carbohydrate degradation; glycolysis; pyruvate from D-glyceraldehyde 3-phosphate: step 4/5.</text>
</comment>
<comment type="subcellular location">
    <subcellularLocation>
        <location evidence="1">Cytoplasm</location>
    </subcellularLocation>
    <subcellularLocation>
        <location evidence="1">Secreted</location>
    </subcellularLocation>
    <subcellularLocation>
        <location evidence="1">Cell surface</location>
    </subcellularLocation>
    <text evidence="1">Fractions of enolase are present in both the cytoplasm and on the cell surface.</text>
</comment>
<comment type="similarity">
    <text evidence="1">Belongs to the enolase family.</text>
</comment>
<name>ENO_DEIRA</name>